<protein>
    <recommendedName>
        <fullName evidence="1">3-dehydroquinate dehydratase</fullName>
        <shortName evidence="1">3-dehydroquinase</shortName>
        <ecNumber evidence="1">4.2.1.10</ecNumber>
    </recommendedName>
    <alternativeName>
        <fullName evidence="1">Type I DHQase</fullName>
    </alternativeName>
    <alternativeName>
        <fullName evidence="1">Type I dehydroquinase</fullName>
        <shortName evidence="1">DHQ1</shortName>
    </alternativeName>
</protein>
<feature type="chain" id="PRO_0000138793" description="3-dehydroquinate dehydratase">
    <location>
        <begin position="1"/>
        <end position="255"/>
    </location>
</feature>
<feature type="active site" description="Proton donor/acceptor" evidence="1">
    <location>
        <position position="143"/>
    </location>
</feature>
<feature type="active site" description="Schiff-base intermediate with substrate" evidence="1">
    <location>
        <position position="170"/>
    </location>
</feature>
<feature type="binding site" evidence="1">
    <location>
        <begin position="46"/>
        <end position="48"/>
    </location>
    <ligand>
        <name>3-dehydroquinate</name>
        <dbReference type="ChEBI" id="CHEBI:32364"/>
    </ligand>
</feature>
<feature type="binding site" evidence="1">
    <location>
        <position position="82"/>
    </location>
    <ligand>
        <name>3-dehydroquinate</name>
        <dbReference type="ChEBI" id="CHEBI:32364"/>
    </ligand>
</feature>
<feature type="binding site" evidence="1">
    <location>
        <position position="213"/>
    </location>
    <ligand>
        <name>3-dehydroquinate</name>
        <dbReference type="ChEBI" id="CHEBI:32364"/>
    </ligand>
</feature>
<feature type="binding site" evidence="1">
    <location>
        <position position="232"/>
    </location>
    <ligand>
        <name>3-dehydroquinate</name>
        <dbReference type="ChEBI" id="CHEBI:32364"/>
    </ligand>
</feature>
<feature type="binding site" evidence="1">
    <location>
        <position position="236"/>
    </location>
    <ligand>
        <name>3-dehydroquinate</name>
        <dbReference type="ChEBI" id="CHEBI:32364"/>
    </ligand>
</feature>
<comment type="function">
    <text evidence="1">Involved in the third step of the chorismate pathway, which leads to the biosynthesis of aromatic amino acids. Catalyzes the cis-dehydration of 3-dehydroquinate (DHQ) and introduces the first double bond of the aromatic ring to yield 3-dehydroshikimate.</text>
</comment>
<comment type="catalytic activity">
    <reaction evidence="1">
        <text>3-dehydroquinate = 3-dehydroshikimate + H2O</text>
        <dbReference type="Rhea" id="RHEA:21096"/>
        <dbReference type="ChEBI" id="CHEBI:15377"/>
        <dbReference type="ChEBI" id="CHEBI:16630"/>
        <dbReference type="ChEBI" id="CHEBI:32364"/>
        <dbReference type="EC" id="4.2.1.10"/>
    </reaction>
</comment>
<comment type="pathway">
    <text evidence="1">Metabolic intermediate biosynthesis; chorismate biosynthesis; chorismate from D-erythrose 4-phosphate and phosphoenolpyruvate: step 3/7.</text>
</comment>
<comment type="subunit">
    <text evidence="1">Homodimer.</text>
</comment>
<comment type="similarity">
    <text evidence="1">Belongs to the type-I 3-dehydroquinase family.</text>
</comment>
<reference key="1">
    <citation type="journal article" date="1993" name="Mol. Microbiol.">
        <title>The organization of the Bacillus subtilis 168 chromosome region between the spoVA and serA genetic loci, based on sequence data.</title>
        <authorList>
            <person name="Sorokin A.V."/>
            <person name="Zumstein E."/>
            <person name="Azevedo V."/>
            <person name="Ehrlich S.D."/>
            <person name="Serror P."/>
        </authorList>
    </citation>
    <scope>NUCLEOTIDE SEQUENCE [GENOMIC DNA]</scope>
    <source>
        <strain>168 / Marburg / ATCC 6051 / DSM 10 / JCM 1465 / NBRC 13719 / NCIMB 3610 / NRRL NRS-744 / VKM B-501</strain>
    </source>
</reference>
<reference key="2">
    <citation type="journal article" date="1997" name="Nature">
        <title>The complete genome sequence of the Gram-positive bacterium Bacillus subtilis.</title>
        <authorList>
            <person name="Kunst F."/>
            <person name="Ogasawara N."/>
            <person name="Moszer I."/>
            <person name="Albertini A.M."/>
            <person name="Alloni G."/>
            <person name="Azevedo V."/>
            <person name="Bertero M.G."/>
            <person name="Bessieres P."/>
            <person name="Bolotin A."/>
            <person name="Borchert S."/>
            <person name="Borriss R."/>
            <person name="Boursier L."/>
            <person name="Brans A."/>
            <person name="Braun M."/>
            <person name="Brignell S.C."/>
            <person name="Bron S."/>
            <person name="Brouillet S."/>
            <person name="Bruschi C.V."/>
            <person name="Caldwell B."/>
            <person name="Capuano V."/>
            <person name="Carter N.M."/>
            <person name="Choi S.-K."/>
            <person name="Codani J.-J."/>
            <person name="Connerton I.F."/>
            <person name="Cummings N.J."/>
            <person name="Daniel R.A."/>
            <person name="Denizot F."/>
            <person name="Devine K.M."/>
            <person name="Duesterhoeft A."/>
            <person name="Ehrlich S.D."/>
            <person name="Emmerson P.T."/>
            <person name="Entian K.-D."/>
            <person name="Errington J."/>
            <person name="Fabret C."/>
            <person name="Ferrari E."/>
            <person name="Foulger D."/>
            <person name="Fritz C."/>
            <person name="Fujita M."/>
            <person name="Fujita Y."/>
            <person name="Fuma S."/>
            <person name="Galizzi A."/>
            <person name="Galleron N."/>
            <person name="Ghim S.-Y."/>
            <person name="Glaser P."/>
            <person name="Goffeau A."/>
            <person name="Golightly E.J."/>
            <person name="Grandi G."/>
            <person name="Guiseppi G."/>
            <person name="Guy B.J."/>
            <person name="Haga K."/>
            <person name="Haiech J."/>
            <person name="Harwood C.R."/>
            <person name="Henaut A."/>
            <person name="Hilbert H."/>
            <person name="Holsappel S."/>
            <person name="Hosono S."/>
            <person name="Hullo M.-F."/>
            <person name="Itaya M."/>
            <person name="Jones L.-M."/>
            <person name="Joris B."/>
            <person name="Karamata D."/>
            <person name="Kasahara Y."/>
            <person name="Klaerr-Blanchard M."/>
            <person name="Klein C."/>
            <person name="Kobayashi Y."/>
            <person name="Koetter P."/>
            <person name="Koningstein G."/>
            <person name="Krogh S."/>
            <person name="Kumano M."/>
            <person name="Kurita K."/>
            <person name="Lapidus A."/>
            <person name="Lardinois S."/>
            <person name="Lauber J."/>
            <person name="Lazarevic V."/>
            <person name="Lee S.-M."/>
            <person name="Levine A."/>
            <person name="Liu H."/>
            <person name="Masuda S."/>
            <person name="Mauel C."/>
            <person name="Medigue C."/>
            <person name="Medina N."/>
            <person name="Mellado R.P."/>
            <person name="Mizuno M."/>
            <person name="Moestl D."/>
            <person name="Nakai S."/>
            <person name="Noback M."/>
            <person name="Noone D."/>
            <person name="O'Reilly M."/>
            <person name="Ogawa K."/>
            <person name="Ogiwara A."/>
            <person name="Oudega B."/>
            <person name="Park S.-H."/>
            <person name="Parro V."/>
            <person name="Pohl T.M."/>
            <person name="Portetelle D."/>
            <person name="Porwollik S."/>
            <person name="Prescott A.M."/>
            <person name="Presecan E."/>
            <person name="Pujic P."/>
            <person name="Purnelle B."/>
            <person name="Rapoport G."/>
            <person name="Rey M."/>
            <person name="Reynolds S."/>
            <person name="Rieger M."/>
            <person name="Rivolta C."/>
            <person name="Rocha E."/>
            <person name="Roche B."/>
            <person name="Rose M."/>
            <person name="Sadaie Y."/>
            <person name="Sato T."/>
            <person name="Scanlan E."/>
            <person name="Schleich S."/>
            <person name="Schroeter R."/>
            <person name="Scoffone F."/>
            <person name="Sekiguchi J."/>
            <person name="Sekowska A."/>
            <person name="Seror S.J."/>
            <person name="Serror P."/>
            <person name="Shin B.-S."/>
            <person name="Soldo B."/>
            <person name="Sorokin A."/>
            <person name="Tacconi E."/>
            <person name="Takagi T."/>
            <person name="Takahashi H."/>
            <person name="Takemaru K."/>
            <person name="Takeuchi M."/>
            <person name="Tamakoshi A."/>
            <person name="Tanaka T."/>
            <person name="Terpstra P."/>
            <person name="Tognoni A."/>
            <person name="Tosato V."/>
            <person name="Uchiyama S."/>
            <person name="Vandenbol M."/>
            <person name="Vannier F."/>
            <person name="Vassarotti A."/>
            <person name="Viari A."/>
            <person name="Wambutt R."/>
            <person name="Wedler E."/>
            <person name="Wedler H."/>
            <person name="Weitzenegger T."/>
            <person name="Winters P."/>
            <person name="Wipat A."/>
            <person name="Yamamoto H."/>
            <person name="Yamane K."/>
            <person name="Yasumoto K."/>
            <person name="Yata K."/>
            <person name="Yoshida K."/>
            <person name="Yoshikawa H.-F."/>
            <person name="Zumstein E."/>
            <person name="Yoshikawa H."/>
            <person name="Danchin A."/>
        </authorList>
    </citation>
    <scope>NUCLEOTIDE SEQUENCE [LARGE SCALE GENOMIC DNA]</scope>
    <source>
        <strain>168</strain>
    </source>
</reference>
<proteinExistence type="inferred from homology"/>
<evidence type="ECO:0000255" key="1">
    <source>
        <dbReference type="HAMAP-Rule" id="MF_00214"/>
    </source>
</evidence>
<name>AROD_BACSU</name>
<gene>
    <name evidence="1" type="primary">aroD</name>
    <name type="synonym">aroC</name>
    <name type="ordered locus">BSU23080</name>
</gene>
<sequence>MNVLTIKGVSIGEGMPKIIIPLMGKTEKQILNEAEAVKLLNPDIVEWRVDVFEKANDREAVTKLISKLRKSLEDKLFLFTFRTHKEGGSMEMDESSYLALLESAIQTKDIDLIDIELFSGDANVKALVSLAEENNVYVVMSNHDFEKTPVKDEIISRLRKMQDLGAHIPKMAVMPNDTGDLLTLLDATYTMKTIYADRPIITMSMAATGLISRLSGEVFGSACTFGAGEEASAPGQIPVSELRSVLDILHKNTRG</sequence>
<accession>P35146</accession>
<dbReference type="EC" id="4.2.1.10" evidence="1"/>
<dbReference type="EMBL" id="L09228">
    <property type="protein sequence ID" value="AAA67501.1"/>
    <property type="molecule type" value="Genomic_DNA"/>
</dbReference>
<dbReference type="EMBL" id="AL009126">
    <property type="protein sequence ID" value="CAB14240.1"/>
    <property type="molecule type" value="Genomic_DNA"/>
</dbReference>
<dbReference type="PIR" id="S45563">
    <property type="entry name" value="S45563"/>
</dbReference>
<dbReference type="RefSeq" id="NP_390189.1">
    <property type="nucleotide sequence ID" value="NC_000964.3"/>
</dbReference>
<dbReference type="RefSeq" id="WP_003230523.1">
    <property type="nucleotide sequence ID" value="NZ_OZ025638.1"/>
</dbReference>
<dbReference type="SMR" id="P35146"/>
<dbReference type="FunCoup" id="P35146">
    <property type="interactions" value="139"/>
</dbReference>
<dbReference type="STRING" id="224308.BSU23080"/>
<dbReference type="PaxDb" id="224308-BSU23080"/>
<dbReference type="EnsemblBacteria" id="CAB14240">
    <property type="protein sequence ID" value="CAB14240"/>
    <property type="gene ID" value="BSU_23080"/>
</dbReference>
<dbReference type="GeneID" id="938963"/>
<dbReference type="KEGG" id="bsu:BSU23080"/>
<dbReference type="PATRIC" id="fig|224308.179.peg.2515"/>
<dbReference type="eggNOG" id="COG0710">
    <property type="taxonomic scope" value="Bacteria"/>
</dbReference>
<dbReference type="InParanoid" id="P35146"/>
<dbReference type="OrthoDB" id="9813659at2"/>
<dbReference type="PhylomeDB" id="P35146"/>
<dbReference type="BioCyc" id="BSUB:BSU23080-MONOMER"/>
<dbReference type="UniPathway" id="UPA00053">
    <property type="reaction ID" value="UER00086"/>
</dbReference>
<dbReference type="Proteomes" id="UP000001570">
    <property type="component" value="Chromosome"/>
</dbReference>
<dbReference type="GO" id="GO:0003855">
    <property type="term" value="F:3-dehydroquinate dehydratase activity"/>
    <property type="evidence" value="ECO:0000318"/>
    <property type="project" value="GO_Central"/>
</dbReference>
<dbReference type="GO" id="GO:0046279">
    <property type="term" value="P:3,4-dihydroxybenzoate biosynthetic process"/>
    <property type="evidence" value="ECO:0000318"/>
    <property type="project" value="GO_Central"/>
</dbReference>
<dbReference type="GO" id="GO:0008652">
    <property type="term" value="P:amino acid biosynthetic process"/>
    <property type="evidence" value="ECO:0007669"/>
    <property type="project" value="UniProtKB-KW"/>
</dbReference>
<dbReference type="GO" id="GO:0009073">
    <property type="term" value="P:aromatic amino acid family biosynthetic process"/>
    <property type="evidence" value="ECO:0007669"/>
    <property type="project" value="UniProtKB-KW"/>
</dbReference>
<dbReference type="GO" id="GO:0009423">
    <property type="term" value="P:chorismate biosynthetic process"/>
    <property type="evidence" value="ECO:0007669"/>
    <property type="project" value="UniProtKB-UniRule"/>
</dbReference>
<dbReference type="CDD" id="cd00502">
    <property type="entry name" value="DHQase_I"/>
    <property type="match status" value="1"/>
</dbReference>
<dbReference type="FunFam" id="3.20.20.70:FF:000047">
    <property type="entry name" value="3-dehydroquinate dehydratase"/>
    <property type="match status" value="1"/>
</dbReference>
<dbReference type="Gene3D" id="3.20.20.70">
    <property type="entry name" value="Aldolase class I"/>
    <property type="match status" value="1"/>
</dbReference>
<dbReference type="HAMAP" id="MF_00214">
    <property type="entry name" value="AroD"/>
    <property type="match status" value="1"/>
</dbReference>
<dbReference type="InterPro" id="IPR018508">
    <property type="entry name" value="3-dehydroquinate_DH_AS"/>
</dbReference>
<dbReference type="InterPro" id="IPR013785">
    <property type="entry name" value="Aldolase_TIM"/>
</dbReference>
<dbReference type="InterPro" id="IPR001381">
    <property type="entry name" value="DHquinase_I"/>
</dbReference>
<dbReference type="InterPro" id="IPR050146">
    <property type="entry name" value="Type-I_3-dehydroquinase"/>
</dbReference>
<dbReference type="NCBIfam" id="TIGR01093">
    <property type="entry name" value="aroD"/>
    <property type="match status" value="1"/>
</dbReference>
<dbReference type="PANTHER" id="PTHR43699">
    <property type="entry name" value="3-DEHYDROQUINATE DEHYDRATASE"/>
    <property type="match status" value="1"/>
</dbReference>
<dbReference type="PANTHER" id="PTHR43699:SF1">
    <property type="entry name" value="3-DEHYDROQUINATE DEHYDRATASE"/>
    <property type="match status" value="1"/>
</dbReference>
<dbReference type="Pfam" id="PF01487">
    <property type="entry name" value="DHquinase_I"/>
    <property type="match status" value="1"/>
</dbReference>
<dbReference type="SUPFAM" id="SSF51569">
    <property type="entry name" value="Aldolase"/>
    <property type="match status" value="1"/>
</dbReference>
<dbReference type="PROSITE" id="PS01028">
    <property type="entry name" value="DEHYDROQUINASE_I"/>
    <property type="match status" value="1"/>
</dbReference>
<organism>
    <name type="scientific">Bacillus subtilis (strain 168)</name>
    <dbReference type="NCBI Taxonomy" id="224308"/>
    <lineage>
        <taxon>Bacteria</taxon>
        <taxon>Bacillati</taxon>
        <taxon>Bacillota</taxon>
        <taxon>Bacilli</taxon>
        <taxon>Bacillales</taxon>
        <taxon>Bacillaceae</taxon>
        <taxon>Bacillus</taxon>
    </lineage>
</organism>
<keyword id="KW-0028">Amino-acid biosynthesis</keyword>
<keyword id="KW-0057">Aromatic amino acid biosynthesis</keyword>
<keyword id="KW-0456">Lyase</keyword>
<keyword id="KW-1185">Reference proteome</keyword>
<keyword id="KW-0704">Schiff base</keyword>